<gene>
    <name evidence="1" type="primary">bchL</name>
    <name type="ordered locus">RC1_2112</name>
</gene>
<feature type="chain" id="PRO_1000133444" description="Light-independent protochlorophyllide reductase iron-sulfur ATP-binding protein">
    <location>
        <begin position="1"/>
        <end position="303"/>
    </location>
</feature>
<feature type="region of interest" description="Disordered" evidence="2">
    <location>
        <begin position="1"/>
        <end position="24"/>
    </location>
</feature>
<feature type="binding site" evidence="1">
    <location>
        <begin position="47"/>
        <end position="52"/>
    </location>
    <ligand>
        <name>ATP</name>
        <dbReference type="ChEBI" id="CHEBI:30616"/>
    </ligand>
</feature>
<feature type="binding site" evidence="1">
    <location>
        <position position="51"/>
    </location>
    <ligand>
        <name>Mg(2+)</name>
        <dbReference type="ChEBI" id="CHEBI:18420"/>
    </ligand>
</feature>
<feature type="binding site" evidence="1">
    <location>
        <position position="76"/>
    </location>
    <ligand>
        <name>ATP</name>
        <dbReference type="ChEBI" id="CHEBI:30616"/>
    </ligand>
</feature>
<feature type="binding site" evidence="1">
    <location>
        <position position="132"/>
    </location>
    <ligand>
        <name>[4Fe-4S] cluster</name>
        <dbReference type="ChEBI" id="CHEBI:49883"/>
        <note>ligand shared between dimeric partners</note>
    </ligand>
</feature>
<feature type="binding site" evidence="1">
    <location>
        <position position="166"/>
    </location>
    <ligand>
        <name>[4Fe-4S] cluster</name>
        <dbReference type="ChEBI" id="CHEBI:49883"/>
        <note>ligand shared between dimeric partners</note>
    </ligand>
</feature>
<feature type="binding site" evidence="1">
    <location>
        <begin position="217"/>
        <end position="218"/>
    </location>
    <ligand>
        <name>ATP</name>
        <dbReference type="ChEBI" id="CHEBI:30616"/>
    </ligand>
</feature>
<feature type="binding site" evidence="1">
    <location>
        <begin position="241"/>
        <end position="243"/>
    </location>
    <ligand>
        <name>ATP</name>
        <dbReference type="ChEBI" id="CHEBI:30616"/>
    </ligand>
</feature>
<evidence type="ECO:0000255" key="1">
    <source>
        <dbReference type="HAMAP-Rule" id="MF_00355"/>
    </source>
</evidence>
<evidence type="ECO:0000256" key="2">
    <source>
        <dbReference type="SAM" id="MobiDB-lite"/>
    </source>
</evidence>
<protein>
    <recommendedName>
        <fullName evidence="1">Light-independent protochlorophyllide reductase iron-sulfur ATP-binding protein</fullName>
        <shortName evidence="1">DPOR subunit L</shortName>
        <shortName evidence="1">LI-POR subunit L</shortName>
        <ecNumber evidence="1">1.3.7.7</ecNumber>
    </recommendedName>
</protein>
<name>BCHL_RHOCS</name>
<accession>B6ITW5</accession>
<reference key="1">
    <citation type="submission" date="2007-03" db="EMBL/GenBank/DDBJ databases">
        <title>Genome sequence of Rhodospirillum centenum.</title>
        <authorList>
            <person name="Touchman J.W."/>
            <person name="Bauer C."/>
            <person name="Blankenship R.E."/>
        </authorList>
    </citation>
    <scope>NUCLEOTIDE SEQUENCE [LARGE SCALE GENOMIC DNA]</scope>
    <source>
        <strain>ATCC 51521 / SW</strain>
    </source>
</reference>
<sequence>MSSVLERPAAPAILPSRQDGEGSVQVKMDPNLKIGTARVFSVYGKGGIGKSTTSSNLSVAFSKLGKRVLQIGCDPKHDSTFTLTKKLVPTVIDVLESVNFHSEELRPEDFVYPGYNGVMCVEAGGPPAGTGCGGYVVGQTVKLLKEHHLLEDTDVVIFDVLGDVVCGGFAAPLQHAQRALIVAANDFDSIFAMNRIVAAIQAKSKNYEVRLGGVICNRSAATDQIDKFNAAVGLNTLAHLPDLDGIRRSRLKKCTVFEMEDEPELERARQEYLRLAATLLAGTEPLAPAPLRDRDIFDLLGFD</sequence>
<proteinExistence type="inferred from homology"/>
<comment type="function">
    <text evidence="1">Component of the dark-operative protochlorophyllide reductase (DPOR) that uses Mg-ATP and reduced ferredoxin to reduce ring D of protochlorophyllide (Pchlide) to form chlorophyllide a (Chlide). This reaction is light-independent. The L component serves as a unique electron donor to the NB-component of the complex, and binds Mg-ATP.</text>
</comment>
<comment type="catalytic activity">
    <reaction evidence="1">
        <text>chlorophyllide a + oxidized 2[4Fe-4S]-[ferredoxin] + 2 ADP + 2 phosphate = protochlorophyllide a + reduced 2[4Fe-4S]-[ferredoxin] + 2 ATP + 2 H2O</text>
        <dbReference type="Rhea" id="RHEA:28202"/>
        <dbReference type="Rhea" id="RHEA-COMP:10002"/>
        <dbReference type="Rhea" id="RHEA-COMP:10004"/>
        <dbReference type="ChEBI" id="CHEBI:15377"/>
        <dbReference type="ChEBI" id="CHEBI:30616"/>
        <dbReference type="ChEBI" id="CHEBI:33722"/>
        <dbReference type="ChEBI" id="CHEBI:33723"/>
        <dbReference type="ChEBI" id="CHEBI:43474"/>
        <dbReference type="ChEBI" id="CHEBI:83348"/>
        <dbReference type="ChEBI" id="CHEBI:83350"/>
        <dbReference type="ChEBI" id="CHEBI:456216"/>
        <dbReference type="EC" id="1.3.7.7"/>
    </reaction>
</comment>
<comment type="cofactor">
    <cofactor evidence="1">
        <name>[4Fe-4S] cluster</name>
        <dbReference type="ChEBI" id="CHEBI:49883"/>
    </cofactor>
    <text evidence="1">Binds 1 [4Fe-4S] cluster per dimer.</text>
</comment>
<comment type="pathway">
    <text evidence="1">Porphyrin-containing compound metabolism; bacteriochlorophyll biosynthesis (light-independent).</text>
</comment>
<comment type="subunit">
    <text evidence="1">Homodimer. Protochlorophyllide reductase is composed of three subunits; BchL, BchN and BchB.</text>
</comment>
<comment type="similarity">
    <text evidence="1">Belongs to the NifH/BchL/ChlL family.</text>
</comment>
<keyword id="KW-0004">4Fe-4S</keyword>
<keyword id="KW-0067">ATP-binding</keyword>
<keyword id="KW-0077">Bacteriochlorophyll biosynthesis</keyword>
<keyword id="KW-0149">Chlorophyll biosynthesis</keyword>
<keyword id="KW-0408">Iron</keyword>
<keyword id="KW-0411">Iron-sulfur</keyword>
<keyword id="KW-0460">Magnesium</keyword>
<keyword id="KW-0479">Metal-binding</keyword>
<keyword id="KW-0547">Nucleotide-binding</keyword>
<keyword id="KW-0560">Oxidoreductase</keyword>
<keyword id="KW-0602">Photosynthesis</keyword>
<keyword id="KW-1185">Reference proteome</keyword>
<dbReference type="EC" id="1.3.7.7" evidence="1"/>
<dbReference type="EMBL" id="CP000613">
    <property type="protein sequence ID" value="ACI99501.1"/>
    <property type="molecule type" value="Genomic_DNA"/>
</dbReference>
<dbReference type="RefSeq" id="WP_012567286.1">
    <property type="nucleotide sequence ID" value="NC_011420.2"/>
</dbReference>
<dbReference type="SMR" id="B6ITW5"/>
<dbReference type="STRING" id="414684.RC1_2112"/>
<dbReference type="KEGG" id="rce:RC1_2112"/>
<dbReference type="eggNOG" id="COG1348">
    <property type="taxonomic scope" value="Bacteria"/>
</dbReference>
<dbReference type="HOGENOM" id="CLU_059373_2_0_5"/>
<dbReference type="OrthoDB" id="9778641at2"/>
<dbReference type="UniPathway" id="UPA00671"/>
<dbReference type="Proteomes" id="UP000001591">
    <property type="component" value="Chromosome"/>
</dbReference>
<dbReference type="GO" id="GO:0051539">
    <property type="term" value="F:4 iron, 4 sulfur cluster binding"/>
    <property type="evidence" value="ECO:0007669"/>
    <property type="project" value="UniProtKB-UniRule"/>
</dbReference>
<dbReference type="GO" id="GO:0005524">
    <property type="term" value="F:ATP binding"/>
    <property type="evidence" value="ECO:0007669"/>
    <property type="project" value="UniProtKB-UniRule"/>
</dbReference>
<dbReference type="GO" id="GO:0046872">
    <property type="term" value="F:metal ion binding"/>
    <property type="evidence" value="ECO:0007669"/>
    <property type="project" value="UniProtKB-KW"/>
</dbReference>
<dbReference type="GO" id="GO:0016730">
    <property type="term" value="F:oxidoreductase activity, acting on iron-sulfur proteins as donors"/>
    <property type="evidence" value="ECO:0007669"/>
    <property type="project" value="InterPro"/>
</dbReference>
<dbReference type="GO" id="GO:0016636">
    <property type="term" value="F:oxidoreductase activity, acting on the CH-CH group of donors, iron-sulfur protein as acceptor"/>
    <property type="evidence" value="ECO:0007669"/>
    <property type="project" value="UniProtKB-UniRule"/>
</dbReference>
<dbReference type="GO" id="GO:0036070">
    <property type="term" value="P:light-independent bacteriochlorophyll biosynthetic process"/>
    <property type="evidence" value="ECO:0007669"/>
    <property type="project" value="UniProtKB-UniRule"/>
</dbReference>
<dbReference type="GO" id="GO:0019685">
    <property type="term" value="P:photosynthesis, dark reaction"/>
    <property type="evidence" value="ECO:0007669"/>
    <property type="project" value="InterPro"/>
</dbReference>
<dbReference type="CDD" id="cd02032">
    <property type="entry name" value="Bchl-like"/>
    <property type="match status" value="1"/>
</dbReference>
<dbReference type="Gene3D" id="3.40.50.300">
    <property type="entry name" value="P-loop containing nucleotide triphosphate hydrolases"/>
    <property type="match status" value="1"/>
</dbReference>
<dbReference type="HAMAP" id="MF_00355">
    <property type="entry name" value="ChlL_BchL"/>
    <property type="match status" value="1"/>
</dbReference>
<dbReference type="InterPro" id="IPR030655">
    <property type="entry name" value="NifH/chlL_CS"/>
</dbReference>
<dbReference type="InterPro" id="IPR000392">
    <property type="entry name" value="NifH/frxC"/>
</dbReference>
<dbReference type="InterPro" id="IPR027417">
    <property type="entry name" value="P-loop_NTPase"/>
</dbReference>
<dbReference type="InterPro" id="IPR005971">
    <property type="entry name" value="Protochlorophyllide_ATP-bd"/>
</dbReference>
<dbReference type="NCBIfam" id="TIGR01281">
    <property type="entry name" value="DPOR_bchL"/>
    <property type="match status" value="1"/>
</dbReference>
<dbReference type="PANTHER" id="PTHR42864">
    <property type="entry name" value="LIGHT-INDEPENDENT PROTOCHLOROPHYLLIDE REDUCTASE IRON-SULFUR ATP-BINDING PROTEIN"/>
    <property type="match status" value="1"/>
</dbReference>
<dbReference type="PANTHER" id="PTHR42864:SF2">
    <property type="entry name" value="LIGHT-INDEPENDENT PROTOCHLOROPHYLLIDE REDUCTASE IRON-SULFUR ATP-BINDING PROTEIN"/>
    <property type="match status" value="1"/>
</dbReference>
<dbReference type="Pfam" id="PF00142">
    <property type="entry name" value="Fer4_NifH"/>
    <property type="match status" value="1"/>
</dbReference>
<dbReference type="PIRSF" id="PIRSF000363">
    <property type="entry name" value="Nitrogenase_iron"/>
    <property type="match status" value="1"/>
</dbReference>
<dbReference type="PRINTS" id="PR00091">
    <property type="entry name" value="NITROGNASEII"/>
</dbReference>
<dbReference type="SUPFAM" id="SSF52540">
    <property type="entry name" value="P-loop containing nucleoside triphosphate hydrolases"/>
    <property type="match status" value="1"/>
</dbReference>
<dbReference type="PROSITE" id="PS00746">
    <property type="entry name" value="NIFH_FRXC_1"/>
    <property type="match status" value="1"/>
</dbReference>
<dbReference type="PROSITE" id="PS00692">
    <property type="entry name" value="NIFH_FRXC_2"/>
    <property type="match status" value="1"/>
</dbReference>
<dbReference type="PROSITE" id="PS51026">
    <property type="entry name" value="NIFH_FRXC_3"/>
    <property type="match status" value="1"/>
</dbReference>
<organism>
    <name type="scientific">Rhodospirillum centenum (strain ATCC 51521 / SW)</name>
    <dbReference type="NCBI Taxonomy" id="414684"/>
    <lineage>
        <taxon>Bacteria</taxon>
        <taxon>Pseudomonadati</taxon>
        <taxon>Pseudomonadota</taxon>
        <taxon>Alphaproteobacteria</taxon>
        <taxon>Rhodospirillales</taxon>
        <taxon>Rhodospirillaceae</taxon>
        <taxon>Rhodospirillum</taxon>
    </lineage>
</organism>